<proteinExistence type="inferred from homology"/>
<evidence type="ECO:0000255" key="1">
    <source>
        <dbReference type="HAMAP-Rule" id="MF_01225"/>
    </source>
</evidence>
<evidence type="ECO:0000255" key="2">
    <source>
        <dbReference type="PROSITE-ProRule" id="PRU01266"/>
    </source>
</evidence>
<protein>
    <recommendedName>
        <fullName evidence="1">GTP 3',8-cyclase</fullName>
        <ecNumber evidence="1">4.1.99.22</ecNumber>
    </recommendedName>
    <alternativeName>
        <fullName evidence="1">Molybdenum cofactor biosynthesis protein A</fullName>
    </alternativeName>
</protein>
<feature type="chain" id="PRO_1000054235" description="GTP 3',8-cyclase">
    <location>
        <begin position="1"/>
        <end position="345"/>
    </location>
</feature>
<feature type="domain" description="Radical SAM core" evidence="2">
    <location>
        <begin position="10"/>
        <end position="236"/>
    </location>
</feature>
<feature type="binding site" evidence="1">
    <location>
        <position position="19"/>
    </location>
    <ligand>
        <name>GTP</name>
        <dbReference type="ChEBI" id="CHEBI:37565"/>
    </ligand>
</feature>
<feature type="binding site" evidence="1">
    <location>
        <position position="26"/>
    </location>
    <ligand>
        <name>[4Fe-4S] cluster</name>
        <dbReference type="ChEBI" id="CHEBI:49883"/>
        <label>1</label>
        <note>4Fe-4S-S-AdoMet</note>
    </ligand>
</feature>
<feature type="binding site" evidence="1">
    <location>
        <position position="30"/>
    </location>
    <ligand>
        <name>[4Fe-4S] cluster</name>
        <dbReference type="ChEBI" id="CHEBI:49883"/>
        <label>1</label>
        <note>4Fe-4S-S-AdoMet</note>
    </ligand>
</feature>
<feature type="binding site" evidence="1">
    <location>
        <position position="32"/>
    </location>
    <ligand>
        <name>S-adenosyl-L-methionine</name>
        <dbReference type="ChEBI" id="CHEBI:59789"/>
    </ligand>
</feature>
<feature type="binding site" evidence="1">
    <location>
        <position position="33"/>
    </location>
    <ligand>
        <name>[4Fe-4S] cluster</name>
        <dbReference type="ChEBI" id="CHEBI:49883"/>
        <label>1</label>
        <note>4Fe-4S-S-AdoMet</note>
    </ligand>
</feature>
<feature type="binding site" evidence="1">
    <location>
        <position position="65"/>
    </location>
    <ligand>
        <name>GTP</name>
        <dbReference type="ChEBI" id="CHEBI:37565"/>
    </ligand>
</feature>
<feature type="binding site" evidence="1">
    <location>
        <position position="69"/>
    </location>
    <ligand>
        <name>S-adenosyl-L-methionine</name>
        <dbReference type="ChEBI" id="CHEBI:59789"/>
    </ligand>
</feature>
<feature type="binding site" evidence="1">
    <location>
        <position position="98"/>
    </location>
    <ligand>
        <name>GTP</name>
        <dbReference type="ChEBI" id="CHEBI:37565"/>
    </ligand>
</feature>
<feature type="binding site" evidence="1">
    <location>
        <position position="123"/>
    </location>
    <ligand>
        <name>S-adenosyl-L-methionine</name>
        <dbReference type="ChEBI" id="CHEBI:59789"/>
    </ligand>
</feature>
<feature type="binding site" evidence="1">
    <location>
        <position position="172"/>
    </location>
    <ligand>
        <name>GTP</name>
        <dbReference type="ChEBI" id="CHEBI:37565"/>
    </ligand>
</feature>
<feature type="binding site" evidence="1">
    <location>
        <position position="206"/>
    </location>
    <ligand>
        <name>S-adenosyl-L-methionine</name>
        <dbReference type="ChEBI" id="CHEBI:59789"/>
    </ligand>
</feature>
<feature type="binding site" evidence="1">
    <location>
        <position position="269"/>
    </location>
    <ligand>
        <name>[4Fe-4S] cluster</name>
        <dbReference type="ChEBI" id="CHEBI:49883"/>
        <label>2</label>
        <note>4Fe-4S-substrate</note>
    </ligand>
</feature>
<feature type="binding site" evidence="1">
    <location>
        <position position="272"/>
    </location>
    <ligand>
        <name>[4Fe-4S] cluster</name>
        <dbReference type="ChEBI" id="CHEBI:49883"/>
        <label>2</label>
        <note>4Fe-4S-substrate</note>
    </ligand>
</feature>
<feature type="binding site" evidence="1">
    <location>
        <begin position="274"/>
        <end position="276"/>
    </location>
    <ligand>
        <name>GTP</name>
        <dbReference type="ChEBI" id="CHEBI:37565"/>
    </ligand>
</feature>
<feature type="binding site" evidence="1">
    <location>
        <position position="286"/>
    </location>
    <ligand>
        <name>[4Fe-4S] cluster</name>
        <dbReference type="ChEBI" id="CHEBI:49883"/>
        <label>2</label>
        <note>4Fe-4S-substrate</note>
    </ligand>
</feature>
<comment type="function">
    <text evidence="1">Catalyzes the cyclization of GTP to (8S)-3',8-cyclo-7,8-dihydroguanosine 5'-triphosphate.</text>
</comment>
<comment type="catalytic activity">
    <reaction evidence="1">
        <text>GTP + AH2 + S-adenosyl-L-methionine = (8S)-3',8-cyclo-7,8-dihydroguanosine 5'-triphosphate + 5'-deoxyadenosine + L-methionine + A + H(+)</text>
        <dbReference type="Rhea" id="RHEA:49576"/>
        <dbReference type="ChEBI" id="CHEBI:13193"/>
        <dbReference type="ChEBI" id="CHEBI:15378"/>
        <dbReference type="ChEBI" id="CHEBI:17319"/>
        <dbReference type="ChEBI" id="CHEBI:17499"/>
        <dbReference type="ChEBI" id="CHEBI:37565"/>
        <dbReference type="ChEBI" id="CHEBI:57844"/>
        <dbReference type="ChEBI" id="CHEBI:59789"/>
        <dbReference type="ChEBI" id="CHEBI:131766"/>
        <dbReference type="EC" id="4.1.99.22"/>
    </reaction>
</comment>
<comment type="cofactor">
    <cofactor evidence="1">
        <name>[4Fe-4S] cluster</name>
        <dbReference type="ChEBI" id="CHEBI:49883"/>
    </cofactor>
    <text evidence="1">Binds 2 [4Fe-4S] clusters. Binds 1 [4Fe-4S] cluster coordinated with 3 cysteines and an exchangeable S-adenosyl-L-methionine and 1 [4Fe-4S] cluster coordinated with 3 cysteines and the GTP-derived substrate.</text>
</comment>
<comment type="pathway">
    <text evidence="1">Cofactor biosynthesis; molybdopterin biosynthesis.</text>
</comment>
<comment type="subunit">
    <text evidence="1">Monomer and homodimer.</text>
</comment>
<comment type="similarity">
    <text evidence="1">Belongs to the radical SAM superfamily. MoaA family.</text>
</comment>
<reference key="1">
    <citation type="submission" date="2005-08" db="EMBL/GenBank/DDBJ databases">
        <title>Complete sequence of Synechococcus sp. CC9902.</title>
        <authorList>
            <person name="Copeland A."/>
            <person name="Lucas S."/>
            <person name="Lapidus A."/>
            <person name="Barry K."/>
            <person name="Detter J.C."/>
            <person name="Glavina T."/>
            <person name="Hammon N."/>
            <person name="Israni S."/>
            <person name="Pitluck S."/>
            <person name="Martinez M."/>
            <person name="Schmutz J."/>
            <person name="Larimer F."/>
            <person name="Land M."/>
            <person name="Kyrpides N."/>
            <person name="Ivanova N."/>
            <person name="Richardson P."/>
        </authorList>
    </citation>
    <scope>NUCLEOTIDE SEQUENCE [LARGE SCALE GENOMIC DNA]</scope>
    <source>
        <strain>CC9902</strain>
    </source>
</reference>
<organism>
    <name type="scientific">Synechococcus sp. (strain CC9902)</name>
    <dbReference type="NCBI Taxonomy" id="316279"/>
    <lineage>
        <taxon>Bacteria</taxon>
        <taxon>Bacillati</taxon>
        <taxon>Cyanobacteriota</taxon>
        <taxon>Cyanophyceae</taxon>
        <taxon>Synechococcales</taxon>
        <taxon>Synechococcaceae</taxon>
        <taxon>Synechococcus</taxon>
    </lineage>
</organism>
<gene>
    <name evidence="1" type="primary">moaA</name>
    <name type="ordered locus">Syncc9902_2269</name>
</gene>
<accession>Q3AVP9</accession>
<sequence>MTDATSNLDSHGRPLGVLRLSLTARCNLACPYCCPDSRDPEGMLDLQDQLRLIRVACSLGVHTVRLTGGEPLLSDRLEPLLAAIALDRPAGLKELALTTNGVLLSPERALRLKCAGLDRITISLDGADAASVARMAGLQGGTPAGQSLLDQVLVGLEAARSAGFNSSHGALKLNAVIQKGRNDDQLIPLARLARDRGLELRLIEYMDVGSRNGWSLAQVMPAMEMVQCVSSHWPLDPVGRSSNSTTSRWRYRDGAGYIGVISSISAPFCGDCNRIRVTADGQVFTCLFASQGVDLRPYLRTDESETQLRECLSELWTRRSDRFSEERSLQIDKEKSHAEMAYLGG</sequence>
<keyword id="KW-0004">4Fe-4S</keyword>
<keyword id="KW-0342">GTP-binding</keyword>
<keyword id="KW-0408">Iron</keyword>
<keyword id="KW-0411">Iron-sulfur</keyword>
<keyword id="KW-0456">Lyase</keyword>
<keyword id="KW-0479">Metal-binding</keyword>
<keyword id="KW-0501">Molybdenum cofactor biosynthesis</keyword>
<keyword id="KW-0547">Nucleotide-binding</keyword>
<keyword id="KW-1185">Reference proteome</keyword>
<keyword id="KW-0949">S-adenosyl-L-methionine</keyword>
<dbReference type="EC" id="4.1.99.22" evidence="1"/>
<dbReference type="EMBL" id="CP000097">
    <property type="protein sequence ID" value="ABB27227.1"/>
    <property type="molecule type" value="Genomic_DNA"/>
</dbReference>
<dbReference type="RefSeq" id="WP_011361003.1">
    <property type="nucleotide sequence ID" value="NC_007513.1"/>
</dbReference>
<dbReference type="SMR" id="Q3AVP9"/>
<dbReference type="STRING" id="316279.Syncc9902_2269"/>
<dbReference type="KEGG" id="sye:Syncc9902_2269"/>
<dbReference type="eggNOG" id="COG2896">
    <property type="taxonomic scope" value="Bacteria"/>
</dbReference>
<dbReference type="HOGENOM" id="CLU_009273_0_1_3"/>
<dbReference type="OrthoDB" id="9763993at2"/>
<dbReference type="UniPathway" id="UPA00344"/>
<dbReference type="Proteomes" id="UP000002712">
    <property type="component" value="Chromosome"/>
</dbReference>
<dbReference type="GO" id="GO:0051539">
    <property type="term" value="F:4 iron, 4 sulfur cluster binding"/>
    <property type="evidence" value="ECO:0007669"/>
    <property type="project" value="UniProtKB-UniRule"/>
</dbReference>
<dbReference type="GO" id="GO:0061799">
    <property type="term" value="F:cyclic pyranopterin monophosphate synthase activity"/>
    <property type="evidence" value="ECO:0007669"/>
    <property type="project" value="TreeGrafter"/>
</dbReference>
<dbReference type="GO" id="GO:0061798">
    <property type="term" value="F:GTP 3',8'-cyclase activity"/>
    <property type="evidence" value="ECO:0007669"/>
    <property type="project" value="UniProtKB-UniRule"/>
</dbReference>
<dbReference type="GO" id="GO:0005525">
    <property type="term" value="F:GTP binding"/>
    <property type="evidence" value="ECO:0007669"/>
    <property type="project" value="UniProtKB-UniRule"/>
</dbReference>
<dbReference type="GO" id="GO:0046872">
    <property type="term" value="F:metal ion binding"/>
    <property type="evidence" value="ECO:0007669"/>
    <property type="project" value="UniProtKB-KW"/>
</dbReference>
<dbReference type="GO" id="GO:1904047">
    <property type="term" value="F:S-adenosyl-L-methionine binding"/>
    <property type="evidence" value="ECO:0007669"/>
    <property type="project" value="UniProtKB-UniRule"/>
</dbReference>
<dbReference type="GO" id="GO:0006777">
    <property type="term" value="P:Mo-molybdopterin cofactor biosynthetic process"/>
    <property type="evidence" value="ECO:0007669"/>
    <property type="project" value="UniProtKB-UniRule"/>
</dbReference>
<dbReference type="CDD" id="cd01335">
    <property type="entry name" value="Radical_SAM"/>
    <property type="match status" value="1"/>
</dbReference>
<dbReference type="CDD" id="cd21117">
    <property type="entry name" value="Twitch_MoaA"/>
    <property type="match status" value="1"/>
</dbReference>
<dbReference type="Gene3D" id="3.20.20.70">
    <property type="entry name" value="Aldolase class I"/>
    <property type="match status" value="1"/>
</dbReference>
<dbReference type="HAMAP" id="MF_01225_B">
    <property type="entry name" value="MoaA_B"/>
    <property type="match status" value="1"/>
</dbReference>
<dbReference type="InterPro" id="IPR013785">
    <property type="entry name" value="Aldolase_TIM"/>
</dbReference>
<dbReference type="InterPro" id="IPR013483">
    <property type="entry name" value="MoaA"/>
</dbReference>
<dbReference type="InterPro" id="IPR010505">
    <property type="entry name" value="MoaA_twitch"/>
</dbReference>
<dbReference type="InterPro" id="IPR050105">
    <property type="entry name" value="MoCo_biosynth_MoaA/MoaC"/>
</dbReference>
<dbReference type="InterPro" id="IPR007197">
    <property type="entry name" value="rSAM"/>
</dbReference>
<dbReference type="NCBIfam" id="TIGR02666">
    <property type="entry name" value="moaA"/>
    <property type="match status" value="1"/>
</dbReference>
<dbReference type="PANTHER" id="PTHR22960:SF0">
    <property type="entry name" value="MOLYBDENUM COFACTOR BIOSYNTHESIS PROTEIN 1"/>
    <property type="match status" value="1"/>
</dbReference>
<dbReference type="PANTHER" id="PTHR22960">
    <property type="entry name" value="MOLYBDOPTERIN COFACTOR SYNTHESIS PROTEIN A"/>
    <property type="match status" value="1"/>
</dbReference>
<dbReference type="Pfam" id="PF06463">
    <property type="entry name" value="Mob_synth_C"/>
    <property type="match status" value="1"/>
</dbReference>
<dbReference type="Pfam" id="PF04055">
    <property type="entry name" value="Radical_SAM"/>
    <property type="match status" value="1"/>
</dbReference>
<dbReference type="SFLD" id="SFLDG01383">
    <property type="entry name" value="cyclic_pyranopterin_phosphate"/>
    <property type="match status" value="1"/>
</dbReference>
<dbReference type="SFLD" id="SFLDS00029">
    <property type="entry name" value="Radical_SAM"/>
    <property type="match status" value="1"/>
</dbReference>
<dbReference type="SUPFAM" id="SSF102114">
    <property type="entry name" value="Radical SAM enzymes"/>
    <property type="match status" value="1"/>
</dbReference>
<dbReference type="PROSITE" id="PS51918">
    <property type="entry name" value="RADICAL_SAM"/>
    <property type="match status" value="1"/>
</dbReference>
<name>MOAA_SYNS9</name>